<accession>Q2PFU1</accession>
<keyword id="KW-0175">Coiled coil</keyword>
<keyword id="KW-0963">Cytoplasm</keyword>
<keyword id="KW-0539">Nucleus</keyword>
<keyword id="KW-0597">Phosphoprotein</keyword>
<keyword id="KW-1185">Reference proteome</keyword>
<protein>
    <recommendedName>
        <fullName evidence="1">Huntingtin-interacting protein K</fullName>
    </recommendedName>
    <alternativeName>
        <fullName>Huntingtin yeast partner K</fullName>
    </alternativeName>
</protein>
<comment type="function">
    <text evidence="1">Component of several N-terminal acetyltransferase complexes (By similarity). Inhibits the N-terminal acetylation activity of the N-terminal acetyltransferase NAA10-NAA15 complex (also called the NatA complex) (By similarity). Has chaperone-like activity preventing polyglutamine (polyQ) aggregation of HTT in neuronal cells probably while associated with the NatA complex (By similarity). May play a role in the NatA complex-mediated N-terminal acetylation of PCNP (By similarity).</text>
</comment>
<comment type="subunit">
    <text evidence="1">Component of the N-terminal acetyltransferase A (NatA)/HYPK complex at least composed of NAA10, NAA15 and HYPK, which has N-terminal acetyltransferase activity (By similarity). Within the complex interacts with NAA10 (By similarity). Within the complex interacts with NAA15 (By similarity). Predominantly interacts with NAA15 in the NAA10-NAA15 complex (also called the NatA complex); the interaction with the NatA complex reduces the acetylation activity of the NatA complex (By similarity). Interacts with HTT (via N-terminus) (By similarity). The NatA complex is required for HYPK stability and for reducing polyQ aggregation of HTT (By similarity). Component of the N-terminal acetyltransferase E (NatE)/HYPK complex at least composed of NAA10, NAA15, NAA50 and HYPK (By similarity). Within the complex interacts with NAA10 and NAA15 (By similarity). Does not interact with NAA50 (By similarity). Interaction with NAA15 reduces the capacity of NAA15 to interact with NAA50 (By similarity). Its capacity to interact with the NatA complex is reduced by NAA50 (By similarity). Does not interact with the N-terminal acetyltransferase B (NatB) complex component NAA25 or the N-terminal acetyltransferase C (NatC) complex component NAA35 (By similarity).</text>
</comment>
<comment type="subcellular location">
    <subcellularLocation>
        <location evidence="1">Nucleus</location>
    </subcellularLocation>
    <subcellularLocation>
        <location evidence="1">Cytoplasm</location>
    </subcellularLocation>
    <text evidence="1">Within the NatA/HYPK complex, may localize to ribosomes.</text>
</comment>
<comment type="caution">
    <text evidence="1">Regulator of the N-terminal acetyltransferase NAA10-NAA15 complex, however it is unclear if it acts as an activator or inhibitor of the complex (By similarity). Has been shown in one study to be required for efficient N-terminal acetylation of NAA10-NAA15 complex substrates in vivo and in vitro (By similarity). Another study, however, has shown that it acts in vitro as an inhibitor of NAA10-NAA15 complex-mediated N-terminal acetylation (By similarity).</text>
</comment>
<comment type="sequence caution" evidence="4">
    <conflict type="erroneous initiation">
        <sequence resource="EMBL-CDS" id="BAE73029"/>
    </conflict>
    <text>Extended N-terminus.</text>
</comment>
<organism>
    <name type="scientific">Macaca fascicularis</name>
    <name type="common">Crab-eating macaque</name>
    <name type="synonym">Cynomolgus monkey</name>
    <dbReference type="NCBI Taxonomy" id="9541"/>
    <lineage>
        <taxon>Eukaryota</taxon>
        <taxon>Metazoa</taxon>
        <taxon>Chordata</taxon>
        <taxon>Craniata</taxon>
        <taxon>Vertebrata</taxon>
        <taxon>Euteleostomi</taxon>
        <taxon>Mammalia</taxon>
        <taxon>Eutheria</taxon>
        <taxon>Euarchontoglires</taxon>
        <taxon>Primates</taxon>
        <taxon>Haplorrhini</taxon>
        <taxon>Catarrhini</taxon>
        <taxon>Cercopithecidae</taxon>
        <taxon>Cercopithecinae</taxon>
        <taxon>Macaca</taxon>
    </lineage>
</organism>
<evidence type="ECO:0000250" key="1">
    <source>
        <dbReference type="UniProtKB" id="Q9NX55"/>
    </source>
</evidence>
<evidence type="ECO:0000255" key="2"/>
<evidence type="ECO:0000256" key="3">
    <source>
        <dbReference type="SAM" id="MobiDB-lite"/>
    </source>
</evidence>
<evidence type="ECO:0000305" key="4"/>
<dbReference type="EMBL" id="AB220496">
    <property type="protein sequence ID" value="BAE73029.1"/>
    <property type="status" value="ALT_INIT"/>
    <property type="molecule type" value="mRNA"/>
</dbReference>
<dbReference type="RefSeq" id="NP_001274614.1">
    <property type="nucleotide sequence ID" value="NM_001287685.1"/>
</dbReference>
<dbReference type="SMR" id="Q2PFU1"/>
<dbReference type="STRING" id="9541.ENSMFAP00000008134"/>
<dbReference type="VEuPathDB" id="HostDB:ENSMFAG00000038315"/>
<dbReference type="eggNOG" id="KOG3450">
    <property type="taxonomic scope" value="Eukaryota"/>
</dbReference>
<dbReference type="Proteomes" id="UP000233100">
    <property type="component" value="Chromosome 7"/>
</dbReference>
<dbReference type="GO" id="GO:0005737">
    <property type="term" value="C:cytoplasm"/>
    <property type="evidence" value="ECO:0007669"/>
    <property type="project" value="UniProtKB-SubCell"/>
</dbReference>
<dbReference type="GO" id="GO:0005634">
    <property type="term" value="C:nucleus"/>
    <property type="evidence" value="ECO:0007669"/>
    <property type="project" value="UniProtKB-SubCell"/>
</dbReference>
<dbReference type="GO" id="GO:0043066">
    <property type="term" value="P:negative regulation of apoptotic process"/>
    <property type="evidence" value="ECO:0007669"/>
    <property type="project" value="TreeGrafter"/>
</dbReference>
<dbReference type="GO" id="GO:0050821">
    <property type="term" value="P:protein stabilization"/>
    <property type="evidence" value="ECO:0007669"/>
    <property type="project" value="TreeGrafter"/>
</dbReference>
<dbReference type="CDD" id="cd14361">
    <property type="entry name" value="UBA_HYPK"/>
    <property type="match status" value="1"/>
</dbReference>
<dbReference type="FunFam" id="1.10.8.10:FF:000052">
    <property type="entry name" value="Huntingtin-interacting protein K (Predicted)"/>
    <property type="match status" value="1"/>
</dbReference>
<dbReference type="Gene3D" id="1.10.8.10">
    <property type="entry name" value="DNA helicase RuvA subunit, C-terminal domain"/>
    <property type="match status" value="1"/>
</dbReference>
<dbReference type="InterPro" id="IPR052617">
    <property type="entry name" value="Huntingtin-int_K"/>
</dbReference>
<dbReference type="InterPro" id="IPR038922">
    <property type="entry name" value="HYPK_UBA"/>
</dbReference>
<dbReference type="InterPro" id="IPR044034">
    <property type="entry name" value="NAC-like_UBA"/>
</dbReference>
<dbReference type="PANTHER" id="PTHR31184:SF2">
    <property type="entry name" value="HUNTINGTIN-INTERACTING PROTEIN K"/>
    <property type="match status" value="1"/>
</dbReference>
<dbReference type="PANTHER" id="PTHR31184">
    <property type="entry name" value="HUNTINGTIN-INTERACTING PROTEIN K FAMILY MEMBER"/>
    <property type="match status" value="1"/>
</dbReference>
<dbReference type="Pfam" id="PF19026">
    <property type="entry name" value="UBA_HYPK"/>
    <property type="match status" value="1"/>
</dbReference>
<name>HYPK_MACFA</name>
<sequence>MATEGDVELELETETSGPERPPEKPRKHDSGAADLERVTDYAEEKEIQSSNLETAMSVIGDRRSREQKAKQEREKELAKVTIKKEDLELIMTEMEISRAAAERSLREHMGNVVEALIALTN</sequence>
<proteinExistence type="evidence at transcript level"/>
<feature type="chain" id="PRO_0000274606" description="Huntingtin-interacting protein K">
    <location>
        <begin position="1"/>
        <end position="121"/>
    </location>
</feature>
<feature type="region of interest" description="Disordered" evidence="3">
    <location>
        <begin position="1"/>
        <end position="75"/>
    </location>
</feature>
<feature type="region of interest" description="Required for association with the NAA10-NAA15 complex" evidence="1">
    <location>
        <begin position="52"/>
        <end position="121"/>
    </location>
</feature>
<feature type="coiled-coil region" evidence="2">
    <location>
        <begin position="62"/>
        <end position="107"/>
    </location>
</feature>
<feature type="compositionally biased region" description="Acidic residues" evidence="3">
    <location>
        <begin position="1"/>
        <end position="13"/>
    </location>
</feature>
<feature type="compositionally biased region" description="Basic and acidic residues" evidence="3">
    <location>
        <begin position="20"/>
        <end position="47"/>
    </location>
</feature>
<feature type="compositionally biased region" description="Basic and acidic residues" evidence="3">
    <location>
        <begin position="60"/>
        <end position="75"/>
    </location>
</feature>
<feature type="modified residue" description="Phosphoserine" evidence="1">
    <location>
        <position position="30"/>
    </location>
</feature>
<reference key="1">
    <citation type="submission" date="2005-07" db="EMBL/GenBank/DDBJ databases">
        <title>Analysis of gene expression in cynomolgus monkey tissues by macaque cDNA oligo-chips.</title>
        <authorList>
            <person name="Kobayashi M."/>
            <person name="Tanuma R."/>
            <person name="Hirata M."/>
            <person name="Osada N."/>
            <person name="Kusuda J."/>
            <person name="Sugano S."/>
            <person name="Hashimoto K."/>
        </authorList>
    </citation>
    <scope>NUCLEOTIDE SEQUENCE [LARGE SCALE MRNA]</scope>
    <source>
        <tissue>Parietal cortex</tissue>
    </source>
</reference>
<gene>
    <name evidence="1" type="primary">HYPK</name>
    <name type="ORF">QnpA-10575</name>
</gene>